<reference key="1">
    <citation type="journal article" date="2009" name="PLoS ONE">
        <title>Non mycobacterial virulence genes in the genome of the emerging pathogen Mycobacterium abscessus.</title>
        <authorList>
            <person name="Ripoll F."/>
            <person name="Pasek S."/>
            <person name="Schenowitz C."/>
            <person name="Dossat C."/>
            <person name="Barbe V."/>
            <person name="Rottman M."/>
            <person name="Macheras E."/>
            <person name="Heym B."/>
            <person name="Herrmann J.L."/>
            <person name="Daffe M."/>
            <person name="Brosch R."/>
            <person name="Risler J.L."/>
            <person name="Gaillard J.L."/>
        </authorList>
    </citation>
    <scope>NUCLEOTIDE SEQUENCE [LARGE SCALE GENOMIC DNA]</scope>
    <source>
        <strain>ATCC 19977 / DSM 44196 / CCUG 20993 / CIP 104536 / JCM 13569 / NCTC 13031 / TMC 1543 / L948</strain>
    </source>
</reference>
<keyword id="KW-1185">Reference proteome</keyword>
<keyword id="KW-0687">Ribonucleoprotein</keyword>
<keyword id="KW-0689">Ribosomal protein</keyword>
<keyword id="KW-0694">RNA-binding</keyword>
<keyword id="KW-0699">rRNA-binding</keyword>
<proteinExistence type="inferred from homology"/>
<accession>B1MMH9</accession>
<organism>
    <name type="scientific">Mycobacteroides abscessus (strain ATCC 19977 / DSM 44196 / CCUG 20993 / CIP 104536 / JCM 13569 / NCTC 13031 / TMC 1543 / L948)</name>
    <name type="common">Mycobacterium abscessus</name>
    <dbReference type="NCBI Taxonomy" id="561007"/>
    <lineage>
        <taxon>Bacteria</taxon>
        <taxon>Bacillati</taxon>
        <taxon>Actinomycetota</taxon>
        <taxon>Actinomycetes</taxon>
        <taxon>Mycobacteriales</taxon>
        <taxon>Mycobacteriaceae</taxon>
        <taxon>Mycobacteroides</taxon>
        <taxon>Mycobacteroides abscessus</taxon>
    </lineage>
</organism>
<feature type="chain" id="PRO_1000126941" description="Large ribosomal subunit protein bL9">
    <location>
        <begin position="1"/>
        <end position="151"/>
    </location>
</feature>
<name>RL9_MYCA9</name>
<dbReference type="EMBL" id="CU458896">
    <property type="protein sequence ID" value="CAM64964.1"/>
    <property type="molecule type" value="Genomic_DNA"/>
</dbReference>
<dbReference type="RefSeq" id="WP_005079044.1">
    <property type="nucleotide sequence ID" value="NZ_MLCG01000007.1"/>
</dbReference>
<dbReference type="SMR" id="B1MMH9"/>
<dbReference type="GeneID" id="93381833"/>
<dbReference type="KEGG" id="mab:MAB_4896c"/>
<dbReference type="Proteomes" id="UP000007137">
    <property type="component" value="Chromosome"/>
</dbReference>
<dbReference type="GO" id="GO:1990904">
    <property type="term" value="C:ribonucleoprotein complex"/>
    <property type="evidence" value="ECO:0007669"/>
    <property type="project" value="UniProtKB-KW"/>
</dbReference>
<dbReference type="GO" id="GO:0005840">
    <property type="term" value="C:ribosome"/>
    <property type="evidence" value="ECO:0007669"/>
    <property type="project" value="UniProtKB-KW"/>
</dbReference>
<dbReference type="GO" id="GO:0019843">
    <property type="term" value="F:rRNA binding"/>
    <property type="evidence" value="ECO:0007669"/>
    <property type="project" value="UniProtKB-UniRule"/>
</dbReference>
<dbReference type="GO" id="GO:0003735">
    <property type="term" value="F:structural constituent of ribosome"/>
    <property type="evidence" value="ECO:0007669"/>
    <property type="project" value="InterPro"/>
</dbReference>
<dbReference type="GO" id="GO:0006412">
    <property type="term" value="P:translation"/>
    <property type="evidence" value="ECO:0007669"/>
    <property type="project" value="UniProtKB-UniRule"/>
</dbReference>
<dbReference type="FunFam" id="3.40.5.10:FF:000003">
    <property type="entry name" value="50S ribosomal protein L9"/>
    <property type="match status" value="1"/>
</dbReference>
<dbReference type="Gene3D" id="3.10.430.100">
    <property type="entry name" value="Ribosomal protein L9, C-terminal domain"/>
    <property type="match status" value="1"/>
</dbReference>
<dbReference type="Gene3D" id="3.40.5.10">
    <property type="entry name" value="Ribosomal protein L9, N-terminal domain"/>
    <property type="match status" value="1"/>
</dbReference>
<dbReference type="HAMAP" id="MF_00503">
    <property type="entry name" value="Ribosomal_bL9"/>
    <property type="match status" value="1"/>
</dbReference>
<dbReference type="InterPro" id="IPR000244">
    <property type="entry name" value="Ribosomal_bL9"/>
</dbReference>
<dbReference type="InterPro" id="IPR009027">
    <property type="entry name" value="Ribosomal_bL9/RNase_H1_N"/>
</dbReference>
<dbReference type="InterPro" id="IPR020594">
    <property type="entry name" value="Ribosomal_bL9_bac/chp"/>
</dbReference>
<dbReference type="InterPro" id="IPR020069">
    <property type="entry name" value="Ribosomal_bL9_C"/>
</dbReference>
<dbReference type="InterPro" id="IPR036791">
    <property type="entry name" value="Ribosomal_bL9_C_sf"/>
</dbReference>
<dbReference type="InterPro" id="IPR020070">
    <property type="entry name" value="Ribosomal_bL9_N"/>
</dbReference>
<dbReference type="InterPro" id="IPR036935">
    <property type="entry name" value="Ribosomal_bL9_N_sf"/>
</dbReference>
<dbReference type="NCBIfam" id="TIGR00158">
    <property type="entry name" value="L9"/>
    <property type="match status" value="1"/>
</dbReference>
<dbReference type="PANTHER" id="PTHR21368">
    <property type="entry name" value="50S RIBOSOMAL PROTEIN L9"/>
    <property type="match status" value="1"/>
</dbReference>
<dbReference type="Pfam" id="PF03948">
    <property type="entry name" value="Ribosomal_L9_C"/>
    <property type="match status" value="1"/>
</dbReference>
<dbReference type="Pfam" id="PF01281">
    <property type="entry name" value="Ribosomal_L9_N"/>
    <property type="match status" value="1"/>
</dbReference>
<dbReference type="SUPFAM" id="SSF55658">
    <property type="entry name" value="L9 N-domain-like"/>
    <property type="match status" value="1"/>
</dbReference>
<dbReference type="SUPFAM" id="SSF55653">
    <property type="entry name" value="Ribosomal protein L9 C-domain"/>
    <property type="match status" value="1"/>
</dbReference>
<dbReference type="PROSITE" id="PS00651">
    <property type="entry name" value="RIBOSOMAL_L9"/>
    <property type="match status" value="1"/>
</dbReference>
<sequence>MKLILTTEVEHLGTAGDAVEVKDGYGRNYLLPRGLAIVATRGAERQANDIRRAREAKEIRGVEHANEIKQAIEGLGAVKLTVKTAGEGKLFGSVTAADVVGAIKAAGGPNLDKRTVTLPKAHIKQIGSYVLDVHLHAGVATKVTVDVVAEG</sequence>
<gene>
    <name evidence="1" type="primary">rplI</name>
    <name type="ordered locus">MAB_4896c</name>
</gene>
<comment type="function">
    <text evidence="1">Binds to the 23S rRNA.</text>
</comment>
<comment type="similarity">
    <text evidence="1">Belongs to the bacterial ribosomal protein bL9 family.</text>
</comment>
<protein>
    <recommendedName>
        <fullName evidence="1">Large ribosomal subunit protein bL9</fullName>
    </recommendedName>
    <alternativeName>
        <fullName evidence="2">50S ribosomal protein L9</fullName>
    </alternativeName>
</protein>
<evidence type="ECO:0000255" key="1">
    <source>
        <dbReference type="HAMAP-Rule" id="MF_00503"/>
    </source>
</evidence>
<evidence type="ECO:0000305" key="2"/>